<evidence type="ECO:0000255" key="1">
    <source>
        <dbReference type="HAMAP-Rule" id="MF_00012"/>
    </source>
</evidence>
<keyword id="KW-0001">2Fe-2S</keyword>
<keyword id="KW-0028">Amino-acid biosynthesis</keyword>
<keyword id="KW-0100">Branched-chain amino acid biosynthesis</keyword>
<keyword id="KW-0408">Iron</keyword>
<keyword id="KW-0411">Iron-sulfur</keyword>
<keyword id="KW-0456">Lyase</keyword>
<keyword id="KW-0460">Magnesium</keyword>
<keyword id="KW-0479">Metal-binding</keyword>
<accession>A5CPY3</accession>
<organism>
    <name type="scientific">Clavibacter michiganensis subsp. michiganensis (strain NCPPB 382)</name>
    <dbReference type="NCBI Taxonomy" id="443906"/>
    <lineage>
        <taxon>Bacteria</taxon>
        <taxon>Bacillati</taxon>
        <taxon>Actinomycetota</taxon>
        <taxon>Actinomycetes</taxon>
        <taxon>Micrococcales</taxon>
        <taxon>Microbacteriaceae</taxon>
        <taxon>Clavibacter</taxon>
    </lineage>
</organism>
<protein>
    <recommendedName>
        <fullName evidence="1">Dihydroxy-acid dehydratase</fullName>
        <shortName evidence="1">DAD</shortName>
        <ecNumber evidence="1">4.2.1.9</ecNumber>
    </recommendedName>
</protein>
<name>ILVD_CLAM3</name>
<reference key="1">
    <citation type="journal article" date="2008" name="J. Bacteriol.">
        <title>The genome sequence of the tomato-pathogenic actinomycete Clavibacter michiganensis subsp. michiganensis NCPPB382 reveals a large island involved in pathogenicity.</title>
        <authorList>
            <person name="Gartemann K.-H."/>
            <person name="Abt B."/>
            <person name="Bekel T."/>
            <person name="Burger A."/>
            <person name="Engemann J."/>
            <person name="Fluegel M."/>
            <person name="Gaigalat L."/>
            <person name="Goesmann A."/>
            <person name="Graefen I."/>
            <person name="Kalinowski J."/>
            <person name="Kaup O."/>
            <person name="Kirchner O."/>
            <person name="Krause L."/>
            <person name="Linke B."/>
            <person name="McHardy A."/>
            <person name="Meyer F."/>
            <person name="Pohle S."/>
            <person name="Rueckert C."/>
            <person name="Schneiker S."/>
            <person name="Zellermann E.-M."/>
            <person name="Puehler A."/>
            <person name="Eichenlaub R."/>
            <person name="Kaiser O."/>
            <person name="Bartels D."/>
        </authorList>
    </citation>
    <scope>NUCLEOTIDE SEQUENCE [LARGE SCALE GENOMIC DNA]</scope>
    <source>
        <strain>NCPPB 382</strain>
    </source>
</reference>
<gene>
    <name evidence="1" type="primary">ilvD</name>
    <name type="ordered locus">CMM_1093</name>
</gene>
<sequence>MPEIDMKPRSRDVTDGIEATAARGMLRAVGMGDEDWAKPQIGVASSWSEITPCNLSLDRLAQGAKEGVHAGGGYPLQFGTISVSDGISMGHEGMHFSLVSREVIADSVETVMMAERLDGSVLLAGCDKSLPGMLMAAARLDLSSVFLYAGSIAPGWVKLSDGTEKEVTIIDAFEAVGACKAGTMSQEDLTRIEKAICPGEGACGGMYTANTMASVAEALGMSLPGSAAPPSADRRRDYFAHRSGEAVVNLIAEGITARDIMTKEAFENAISVVMAFGGSTNAVLHLLAIAREAEVDLQLSDFNRIADRVPHLGDLKPFGRFVMNDVDRVGGVPVVMKALLDAGLLHGDVMTVTGRTMRENLEAMDLAELDGTVIRKMDDPIHATGGISVLHGSLAPEGAVVKTAGFDLDVFEGPARVFERERAAMDALTEGLISKGDVIVIRYEGPKGGPGMREMLAITGAIKGAGLGKDVLLLTDGRFSGGTTGLCIGHMAPEAVDAGPVAFVRDGDRIRVDIAARTLDLLVDEAELAARREGWAPLPPRYTRGVLAKYAKLVHSAAEGAITG</sequence>
<dbReference type="EC" id="4.2.1.9" evidence="1"/>
<dbReference type="EMBL" id="AM711867">
    <property type="protein sequence ID" value="CAN01136.1"/>
    <property type="molecule type" value="Genomic_DNA"/>
</dbReference>
<dbReference type="RefSeq" id="WP_012037779.1">
    <property type="nucleotide sequence ID" value="NC_009480.1"/>
</dbReference>
<dbReference type="SMR" id="A5CPY3"/>
<dbReference type="GeneID" id="92947059"/>
<dbReference type="KEGG" id="cmi:CMM_1093"/>
<dbReference type="eggNOG" id="COG0129">
    <property type="taxonomic scope" value="Bacteria"/>
</dbReference>
<dbReference type="HOGENOM" id="CLU_014271_4_2_11"/>
<dbReference type="OrthoDB" id="9807077at2"/>
<dbReference type="UniPathway" id="UPA00047">
    <property type="reaction ID" value="UER00057"/>
</dbReference>
<dbReference type="UniPathway" id="UPA00049">
    <property type="reaction ID" value="UER00061"/>
</dbReference>
<dbReference type="Proteomes" id="UP000001564">
    <property type="component" value="Chromosome"/>
</dbReference>
<dbReference type="GO" id="GO:0051537">
    <property type="term" value="F:2 iron, 2 sulfur cluster binding"/>
    <property type="evidence" value="ECO:0007669"/>
    <property type="project" value="UniProtKB-UniRule"/>
</dbReference>
<dbReference type="GO" id="GO:0004160">
    <property type="term" value="F:dihydroxy-acid dehydratase activity"/>
    <property type="evidence" value="ECO:0007669"/>
    <property type="project" value="UniProtKB-UniRule"/>
</dbReference>
<dbReference type="GO" id="GO:0000287">
    <property type="term" value="F:magnesium ion binding"/>
    <property type="evidence" value="ECO:0007669"/>
    <property type="project" value="UniProtKB-UniRule"/>
</dbReference>
<dbReference type="GO" id="GO:0009097">
    <property type="term" value="P:isoleucine biosynthetic process"/>
    <property type="evidence" value="ECO:0007669"/>
    <property type="project" value="UniProtKB-UniRule"/>
</dbReference>
<dbReference type="GO" id="GO:0009099">
    <property type="term" value="P:L-valine biosynthetic process"/>
    <property type="evidence" value="ECO:0007669"/>
    <property type="project" value="UniProtKB-UniRule"/>
</dbReference>
<dbReference type="FunFam" id="3.50.30.80:FF:000001">
    <property type="entry name" value="Dihydroxy-acid dehydratase"/>
    <property type="match status" value="1"/>
</dbReference>
<dbReference type="Gene3D" id="3.50.30.80">
    <property type="entry name" value="IlvD/EDD C-terminal domain-like"/>
    <property type="match status" value="1"/>
</dbReference>
<dbReference type="HAMAP" id="MF_00012">
    <property type="entry name" value="IlvD"/>
    <property type="match status" value="1"/>
</dbReference>
<dbReference type="InterPro" id="IPR050165">
    <property type="entry name" value="DHAD_IlvD/Edd"/>
</dbReference>
<dbReference type="InterPro" id="IPR042096">
    <property type="entry name" value="Dihydro-acid_dehy_C"/>
</dbReference>
<dbReference type="InterPro" id="IPR004404">
    <property type="entry name" value="DihydroxyA_deHydtase"/>
</dbReference>
<dbReference type="InterPro" id="IPR020558">
    <property type="entry name" value="DiOHA_6PGluconate_deHydtase_CS"/>
</dbReference>
<dbReference type="InterPro" id="IPR056740">
    <property type="entry name" value="ILV_EDD_C"/>
</dbReference>
<dbReference type="InterPro" id="IPR000581">
    <property type="entry name" value="ILV_EDD_N"/>
</dbReference>
<dbReference type="InterPro" id="IPR037237">
    <property type="entry name" value="IlvD/EDD_N"/>
</dbReference>
<dbReference type="NCBIfam" id="TIGR00110">
    <property type="entry name" value="ilvD"/>
    <property type="match status" value="1"/>
</dbReference>
<dbReference type="NCBIfam" id="NF002068">
    <property type="entry name" value="PRK00911.1"/>
    <property type="match status" value="1"/>
</dbReference>
<dbReference type="PANTHER" id="PTHR21000">
    <property type="entry name" value="DIHYDROXY-ACID DEHYDRATASE DAD"/>
    <property type="match status" value="1"/>
</dbReference>
<dbReference type="PANTHER" id="PTHR21000:SF5">
    <property type="entry name" value="DIHYDROXY-ACID DEHYDRATASE, MITOCHONDRIAL"/>
    <property type="match status" value="1"/>
</dbReference>
<dbReference type="Pfam" id="PF24877">
    <property type="entry name" value="ILV_EDD_C"/>
    <property type="match status" value="1"/>
</dbReference>
<dbReference type="Pfam" id="PF00920">
    <property type="entry name" value="ILVD_EDD_N"/>
    <property type="match status" value="1"/>
</dbReference>
<dbReference type="SUPFAM" id="SSF143975">
    <property type="entry name" value="IlvD/EDD N-terminal domain-like"/>
    <property type="match status" value="1"/>
</dbReference>
<dbReference type="SUPFAM" id="SSF52016">
    <property type="entry name" value="LeuD/IlvD-like"/>
    <property type="match status" value="1"/>
</dbReference>
<dbReference type="PROSITE" id="PS00886">
    <property type="entry name" value="ILVD_EDD_1"/>
    <property type="match status" value="1"/>
</dbReference>
<dbReference type="PROSITE" id="PS00887">
    <property type="entry name" value="ILVD_EDD_2"/>
    <property type="match status" value="1"/>
</dbReference>
<feature type="chain" id="PRO_1000000975" description="Dihydroxy-acid dehydratase">
    <location>
        <begin position="1"/>
        <end position="564"/>
    </location>
</feature>
<feature type="active site" description="Proton acceptor" evidence="1">
    <location>
        <position position="480"/>
    </location>
</feature>
<feature type="binding site" evidence="1">
    <location>
        <position position="53"/>
    </location>
    <ligand>
        <name>[2Fe-2S] cluster</name>
        <dbReference type="ChEBI" id="CHEBI:190135"/>
    </ligand>
</feature>
<feature type="binding site" evidence="1">
    <location>
        <position position="85"/>
    </location>
    <ligand>
        <name>Mg(2+)</name>
        <dbReference type="ChEBI" id="CHEBI:18420"/>
    </ligand>
</feature>
<feature type="binding site" evidence="1">
    <location>
        <position position="126"/>
    </location>
    <ligand>
        <name>[2Fe-2S] cluster</name>
        <dbReference type="ChEBI" id="CHEBI:190135"/>
    </ligand>
</feature>
<feature type="binding site" evidence="1">
    <location>
        <position position="127"/>
    </location>
    <ligand>
        <name>Mg(2+)</name>
        <dbReference type="ChEBI" id="CHEBI:18420"/>
    </ligand>
</feature>
<feature type="binding site" description="via carbamate group" evidence="1">
    <location>
        <position position="128"/>
    </location>
    <ligand>
        <name>Mg(2+)</name>
        <dbReference type="ChEBI" id="CHEBI:18420"/>
    </ligand>
</feature>
<feature type="binding site" evidence="1">
    <location>
        <position position="203"/>
    </location>
    <ligand>
        <name>[2Fe-2S] cluster</name>
        <dbReference type="ChEBI" id="CHEBI:190135"/>
    </ligand>
</feature>
<feature type="binding site" evidence="1">
    <location>
        <position position="454"/>
    </location>
    <ligand>
        <name>Mg(2+)</name>
        <dbReference type="ChEBI" id="CHEBI:18420"/>
    </ligand>
</feature>
<feature type="modified residue" description="N6-carboxylysine" evidence="1">
    <location>
        <position position="128"/>
    </location>
</feature>
<proteinExistence type="inferred from homology"/>
<comment type="function">
    <text evidence="1">Functions in the biosynthesis of branched-chain amino acids. Catalyzes the dehydration of (2R,3R)-2,3-dihydroxy-3-methylpentanoate (2,3-dihydroxy-3-methylvalerate) into 2-oxo-3-methylpentanoate (2-oxo-3-methylvalerate) and of (2R)-2,3-dihydroxy-3-methylbutanoate (2,3-dihydroxyisovalerate) into 2-oxo-3-methylbutanoate (2-oxoisovalerate), the penultimate precursor to L-isoleucine and L-valine, respectively.</text>
</comment>
<comment type="catalytic activity">
    <reaction evidence="1">
        <text>(2R)-2,3-dihydroxy-3-methylbutanoate = 3-methyl-2-oxobutanoate + H2O</text>
        <dbReference type="Rhea" id="RHEA:24809"/>
        <dbReference type="ChEBI" id="CHEBI:11851"/>
        <dbReference type="ChEBI" id="CHEBI:15377"/>
        <dbReference type="ChEBI" id="CHEBI:49072"/>
        <dbReference type="EC" id="4.2.1.9"/>
    </reaction>
    <physiologicalReaction direction="left-to-right" evidence="1">
        <dbReference type="Rhea" id="RHEA:24810"/>
    </physiologicalReaction>
</comment>
<comment type="catalytic activity">
    <reaction evidence="1">
        <text>(2R,3R)-2,3-dihydroxy-3-methylpentanoate = (S)-3-methyl-2-oxopentanoate + H2O</text>
        <dbReference type="Rhea" id="RHEA:27694"/>
        <dbReference type="ChEBI" id="CHEBI:15377"/>
        <dbReference type="ChEBI" id="CHEBI:35146"/>
        <dbReference type="ChEBI" id="CHEBI:49258"/>
        <dbReference type="EC" id="4.2.1.9"/>
    </reaction>
    <physiologicalReaction direction="left-to-right" evidence="1">
        <dbReference type="Rhea" id="RHEA:27695"/>
    </physiologicalReaction>
</comment>
<comment type="cofactor">
    <cofactor evidence="1">
        <name>[2Fe-2S] cluster</name>
        <dbReference type="ChEBI" id="CHEBI:190135"/>
    </cofactor>
    <text evidence="1">Binds 1 [2Fe-2S] cluster per subunit. This cluster acts as a Lewis acid cofactor.</text>
</comment>
<comment type="cofactor">
    <cofactor evidence="1">
        <name>Mg(2+)</name>
        <dbReference type="ChEBI" id="CHEBI:18420"/>
    </cofactor>
</comment>
<comment type="pathway">
    <text evidence="1">Amino-acid biosynthesis; L-isoleucine biosynthesis; L-isoleucine from 2-oxobutanoate: step 3/4.</text>
</comment>
<comment type="pathway">
    <text evidence="1">Amino-acid biosynthesis; L-valine biosynthesis; L-valine from pyruvate: step 3/4.</text>
</comment>
<comment type="subunit">
    <text evidence="1">Homodimer.</text>
</comment>
<comment type="similarity">
    <text evidence="1">Belongs to the IlvD/Edd family.</text>
</comment>